<reference key="1">
    <citation type="journal article" date="2007" name="PLoS Genet.">
        <title>The complete genome sequence of Yersinia pseudotuberculosis IP31758, the causative agent of Far East scarlet-like fever.</title>
        <authorList>
            <person name="Eppinger M."/>
            <person name="Rosovitz M.J."/>
            <person name="Fricke W.F."/>
            <person name="Rasko D.A."/>
            <person name="Kokorina G."/>
            <person name="Fayolle C."/>
            <person name="Lindler L.E."/>
            <person name="Carniel E."/>
            <person name="Ravel J."/>
        </authorList>
    </citation>
    <scope>NUCLEOTIDE SEQUENCE [LARGE SCALE GENOMIC DNA]</scope>
    <source>
        <strain>IP 31758</strain>
    </source>
</reference>
<sequence length="100" mass="10880">MIPLQHGLILAAILFVLGLTGLLIRRNLLFMLISLEVMINAAALAFVVAGSYWGQADGQVMYILAITLAAAEASIGLALLLQLYRRRHTLDIDTVSEMRG</sequence>
<comment type="function">
    <text evidence="1">NDH-1 shuttles electrons from NADH, via FMN and iron-sulfur (Fe-S) centers, to quinones in the respiratory chain. The immediate electron acceptor for the enzyme in this species is believed to be ubiquinone. Couples the redox reaction to proton translocation (for every two electrons transferred, four hydrogen ions are translocated across the cytoplasmic membrane), and thus conserves the redox energy in a proton gradient.</text>
</comment>
<comment type="catalytic activity">
    <reaction evidence="1">
        <text>a quinone + NADH + 5 H(+)(in) = a quinol + NAD(+) + 4 H(+)(out)</text>
        <dbReference type="Rhea" id="RHEA:57888"/>
        <dbReference type="ChEBI" id="CHEBI:15378"/>
        <dbReference type="ChEBI" id="CHEBI:24646"/>
        <dbReference type="ChEBI" id="CHEBI:57540"/>
        <dbReference type="ChEBI" id="CHEBI:57945"/>
        <dbReference type="ChEBI" id="CHEBI:132124"/>
    </reaction>
</comment>
<comment type="subunit">
    <text evidence="1">NDH-1 is composed of 13 different subunits. Subunits NuoA, H, J, K, L, M, N constitute the membrane sector of the complex.</text>
</comment>
<comment type="subcellular location">
    <subcellularLocation>
        <location evidence="1">Cell inner membrane</location>
        <topology evidence="1">Multi-pass membrane protein</topology>
    </subcellularLocation>
</comment>
<comment type="similarity">
    <text evidence="1">Belongs to the complex I subunit 4L family.</text>
</comment>
<evidence type="ECO:0000255" key="1">
    <source>
        <dbReference type="HAMAP-Rule" id="MF_01456"/>
    </source>
</evidence>
<keyword id="KW-0997">Cell inner membrane</keyword>
<keyword id="KW-1003">Cell membrane</keyword>
<keyword id="KW-0472">Membrane</keyword>
<keyword id="KW-0520">NAD</keyword>
<keyword id="KW-0874">Quinone</keyword>
<keyword id="KW-1278">Translocase</keyword>
<keyword id="KW-0812">Transmembrane</keyword>
<keyword id="KW-1133">Transmembrane helix</keyword>
<keyword id="KW-0813">Transport</keyword>
<keyword id="KW-0830">Ubiquinone</keyword>
<name>NUOK_YERP3</name>
<dbReference type="EC" id="7.1.1.-" evidence="1"/>
<dbReference type="EMBL" id="CP000720">
    <property type="protein sequence ID" value="ABS46591.1"/>
    <property type="molecule type" value="Genomic_DNA"/>
</dbReference>
<dbReference type="RefSeq" id="WP_002210271.1">
    <property type="nucleotide sequence ID" value="NC_009708.1"/>
</dbReference>
<dbReference type="SMR" id="A7FGR3"/>
<dbReference type="GeneID" id="96666077"/>
<dbReference type="KEGG" id="ypi:YpsIP31758_1463"/>
<dbReference type="HOGENOM" id="CLU_144724_0_1_6"/>
<dbReference type="Proteomes" id="UP000002412">
    <property type="component" value="Chromosome"/>
</dbReference>
<dbReference type="GO" id="GO:0030964">
    <property type="term" value="C:NADH dehydrogenase complex"/>
    <property type="evidence" value="ECO:0007669"/>
    <property type="project" value="TreeGrafter"/>
</dbReference>
<dbReference type="GO" id="GO:0005886">
    <property type="term" value="C:plasma membrane"/>
    <property type="evidence" value="ECO:0007669"/>
    <property type="project" value="UniProtKB-SubCell"/>
</dbReference>
<dbReference type="GO" id="GO:0050136">
    <property type="term" value="F:NADH:ubiquinone reductase (non-electrogenic) activity"/>
    <property type="evidence" value="ECO:0007669"/>
    <property type="project" value="UniProtKB-UniRule"/>
</dbReference>
<dbReference type="GO" id="GO:0048038">
    <property type="term" value="F:quinone binding"/>
    <property type="evidence" value="ECO:0007669"/>
    <property type="project" value="UniProtKB-KW"/>
</dbReference>
<dbReference type="GO" id="GO:0042773">
    <property type="term" value="P:ATP synthesis coupled electron transport"/>
    <property type="evidence" value="ECO:0007669"/>
    <property type="project" value="InterPro"/>
</dbReference>
<dbReference type="FunFam" id="1.10.287.3510:FF:000001">
    <property type="entry name" value="NADH-quinone oxidoreductase subunit K"/>
    <property type="match status" value="1"/>
</dbReference>
<dbReference type="Gene3D" id="1.10.287.3510">
    <property type="match status" value="1"/>
</dbReference>
<dbReference type="HAMAP" id="MF_01456">
    <property type="entry name" value="NDH1_NuoK"/>
    <property type="match status" value="1"/>
</dbReference>
<dbReference type="InterPro" id="IPR001133">
    <property type="entry name" value="NADH_UbQ_OxRdtase_chain4L/K"/>
</dbReference>
<dbReference type="InterPro" id="IPR039428">
    <property type="entry name" value="NUOK/Mnh_C1-like"/>
</dbReference>
<dbReference type="NCBIfam" id="NF004319">
    <property type="entry name" value="PRK05715.1-1"/>
    <property type="match status" value="1"/>
</dbReference>
<dbReference type="NCBIfam" id="NF004320">
    <property type="entry name" value="PRK05715.1-2"/>
    <property type="match status" value="1"/>
</dbReference>
<dbReference type="PANTHER" id="PTHR11434:SF16">
    <property type="entry name" value="NADH-UBIQUINONE OXIDOREDUCTASE CHAIN 4L"/>
    <property type="match status" value="1"/>
</dbReference>
<dbReference type="PANTHER" id="PTHR11434">
    <property type="entry name" value="NADH-UBIQUINONE OXIDOREDUCTASE SUBUNIT ND4L"/>
    <property type="match status" value="1"/>
</dbReference>
<dbReference type="Pfam" id="PF00420">
    <property type="entry name" value="Oxidored_q2"/>
    <property type="match status" value="1"/>
</dbReference>
<accession>A7FGR3</accession>
<proteinExistence type="inferred from homology"/>
<feature type="chain" id="PRO_0000390290" description="NADH-quinone oxidoreductase subunit K">
    <location>
        <begin position="1"/>
        <end position="100"/>
    </location>
</feature>
<feature type="transmembrane region" description="Helical" evidence="1">
    <location>
        <begin position="4"/>
        <end position="24"/>
    </location>
</feature>
<feature type="transmembrane region" description="Helical" evidence="1">
    <location>
        <begin position="28"/>
        <end position="48"/>
    </location>
</feature>
<feature type="transmembrane region" description="Helical" evidence="1">
    <location>
        <begin position="60"/>
        <end position="80"/>
    </location>
</feature>
<organism>
    <name type="scientific">Yersinia pseudotuberculosis serotype O:1b (strain IP 31758)</name>
    <dbReference type="NCBI Taxonomy" id="349747"/>
    <lineage>
        <taxon>Bacteria</taxon>
        <taxon>Pseudomonadati</taxon>
        <taxon>Pseudomonadota</taxon>
        <taxon>Gammaproteobacteria</taxon>
        <taxon>Enterobacterales</taxon>
        <taxon>Yersiniaceae</taxon>
        <taxon>Yersinia</taxon>
    </lineage>
</organism>
<gene>
    <name evidence="1" type="primary">nuoK</name>
    <name type="ordered locus">YpsIP31758_1463</name>
</gene>
<protein>
    <recommendedName>
        <fullName evidence="1">NADH-quinone oxidoreductase subunit K</fullName>
        <ecNumber evidence="1">7.1.1.-</ecNumber>
    </recommendedName>
    <alternativeName>
        <fullName evidence="1">NADH dehydrogenase I subunit K</fullName>
    </alternativeName>
    <alternativeName>
        <fullName evidence="1">NDH-1 subunit K</fullName>
    </alternativeName>
</protein>